<keyword id="KW-0002">3D-structure</keyword>
<keyword id="KW-1015">Disulfide bond</keyword>
<keyword id="KW-0378">Hydrolase</keyword>
<keyword id="KW-1185">Reference proteome</keyword>
<protein>
    <recommendedName>
        <fullName evidence="1">Cyclic amide hydrolase</fullName>
        <shortName evidence="1">CyAH</shortName>
        <ecNumber evidence="1">3.5.2.-</ecNumber>
    </recommendedName>
    <alternativeName>
        <fullName evidence="1">Ring-opening amidohydrolase</fullName>
    </alternativeName>
</protein>
<reference key="1">
    <citation type="submission" date="2010-10" db="EMBL/GenBank/DDBJ databases">
        <title>Complete sequence of Frankia sp. EuI1c.</title>
        <authorList>
            <consortium name="US DOE Joint Genome Institute"/>
            <person name="Lucas S."/>
            <person name="Copeland A."/>
            <person name="Lapidus A."/>
            <person name="Cheng J.-F."/>
            <person name="Bruce D."/>
            <person name="Goodwin L."/>
            <person name="Pitluck S."/>
            <person name="Chertkov O."/>
            <person name="Detter J.C."/>
            <person name="Han C."/>
            <person name="Tapia R."/>
            <person name="Land M."/>
            <person name="Hauser L."/>
            <person name="Jeffries C."/>
            <person name="Kyrpides N."/>
            <person name="Ivanova N."/>
            <person name="Mikhailova N."/>
            <person name="Beauchemin N."/>
            <person name="Sen A."/>
            <person name="Sur S.A."/>
            <person name="Gtari M."/>
            <person name="Wall L."/>
            <person name="Tisa L."/>
            <person name="Woyke T."/>
        </authorList>
    </citation>
    <scope>NUCLEOTIDE SEQUENCE [LARGE SCALE GENOMIC DNA]</scope>
    <source>
        <strain>DSM 45817 / CECT 9037 / DDB 130130 / EuI1c</strain>
    </source>
</reference>
<reference evidence="4 5 6" key="2">
    <citation type="journal article" date="2017" name="Appl. Environ. Microbiol.">
        <title>High resolution X-ray structures of two functionally distinct members of the cyclic amide hydrolase (CyAH) family of Toblerone fold enzymes.</title>
        <authorList>
            <person name="Peat T.S."/>
            <person name="Balotra S."/>
            <person name="Wilding M."/>
            <person name="Hartley C.J."/>
            <person name="Newman J."/>
            <person name="Scott C."/>
        </authorList>
    </citation>
    <scope>X-RAY CRYSTALLOGRAPHY (1.71 ANGSTROMS)</scope>
    <scope>DISULFIDE BONDS</scope>
    <scope>FUNCTION</scope>
</reference>
<feature type="chain" id="PRO_0000439911" description="Cyclic amide hydrolase">
    <location>
        <begin position="1"/>
        <end position="390"/>
    </location>
</feature>
<feature type="region of interest" description="RU A" evidence="1">
    <location>
        <begin position="1"/>
        <end position="118"/>
    </location>
</feature>
<feature type="region of interest" description="RU B" evidence="1">
    <location>
        <begin position="127"/>
        <end position="268"/>
    </location>
</feature>
<feature type="region of interest" description="RU C" evidence="1">
    <location>
        <begin position="274"/>
        <end position="390"/>
    </location>
</feature>
<feature type="active site" evidence="1">
    <location>
        <position position="177"/>
    </location>
</feature>
<feature type="active site" description="Nucleophile" evidence="1">
    <location>
        <position position="251"/>
    </location>
</feature>
<feature type="binding site" evidence="1">
    <location>
        <position position="66"/>
    </location>
    <ligand>
        <name>substrate</name>
    </ligand>
</feature>
<feature type="binding site" evidence="1">
    <location>
        <begin position="97"/>
        <end position="98"/>
    </location>
    <ligand>
        <name>substrate</name>
    </ligand>
</feature>
<feature type="binding site" evidence="1">
    <location>
        <position position="213"/>
    </location>
    <ligand>
        <name>substrate</name>
    </ligand>
</feature>
<feature type="binding site" evidence="1">
    <location>
        <begin position="251"/>
        <end position="252"/>
    </location>
    <ligand>
        <name>substrate</name>
    </ligand>
</feature>
<feature type="binding site" evidence="1">
    <location>
        <position position="346"/>
    </location>
    <ligand>
        <name>substrate</name>
    </ligand>
</feature>
<feature type="binding site" evidence="1">
    <location>
        <begin position="365"/>
        <end position="366"/>
    </location>
    <ligand>
        <name>substrate</name>
    </ligand>
</feature>
<feature type="disulfide bond" description="Interchain (with C-304)" evidence="1 2">
    <location>
        <position position="303"/>
    </location>
</feature>
<feature type="disulfide bond" description="Interchain (with C-303)" evidence="1 2">
    <location>
        <position position="304"/>
    </location>
</feature>
<feature type="strand" evidence="7">
    <location>
        <begin position="15"/>
        <end position="24"/>
    </location>
</feature>
<feature type="helix" evidence="7">
    <location>
        <begin position="32"/>
        <end position="39"/>
    </location>
</feature>
<feature type="strand" evidence="7">
    <location>
        <begin position="41"/>
        <end position="43"/>
    </location>
</feature>
<feature type="helix" evidence="7">
    <location>
        <begin position="45"/>
        <end position="47"/>
    </location>
</feature>
<feature type="strand" evidence="7">
    <location>
        <begin position="48"/>
        <end position="57"/>
    </location>
</feature>
<feature type="helix" evidence="7">
    <location>
        <begin position="64"/>
        <end position="81"/>
    </location>
</feature>
<feature type="helix" evidence="7">
    <location>
        <begin position="85"/>
        <end position="88"/>
    </location>
</feature>
<feature type="turn" evidence="7">
    <location>
        <begin position="89"/>
        <end position="91"/>
    </location>
</feature>
<feature type="strand" evidence="7">
    <location>
        <begin position="93"/>
        <end position="98"/>
    </location>
</feature>
<feature type="strand" evidence="7">
    <location>
        <begin position="107"/>
        <end position="118"/>
    </location>
</feature>
<feature type="strand" evidence="7">
    <location>
        <begin position="127"/>
        <end position="134"/>
    </location>
</feature>
<feature type="helix" evidence="7">
    <location>
        <begin position="140"/>
        <end position="142"/>
    </location>
</feature>
<feature type="helix" evidence="7">
    <location>
        <begin position="146"/>
        <end position="162"/>
    </location>
</feature>
<feature type="helix" evidence="7">
    <location>
        <begin position="168"/>
        <end position="170"/>
    </location>
</feature>
<feature type="strand" evidence="7">
    <location>
        <begin position="171"/>
        <end position="178"/>
    </location>
</feature>
<feature type="helix" evidence="7">
    <location>
        <begin position="183"/>
        <end position="191"/>
    </location>
</feature>
<feature type="helix" evidence="7">
    <location>
        <begin position="209"/>
        <end position="223"/>
    </location>
</feature>
<feature type="helix" evidence="7">
    <location>
        <begin position="229"/>
        <end position="231"/>
    </location>
</feature>
<feature type="turn" evidence="7">
    <location>
        <begin position="234"/>
        <end position="236"/>
    </location>
</feature>
<feature type="strand" evidence="8">
    <location>
        <begin position="237"/>
        <end position="239"/>
    </location>
</feature>
<feature type="strand" evidence="7">
    <location>
        <begin position="246"/>
        <end position="252"/>
    </location>
</feature>
<feature type="strand" evidence="7">
    <location>
        <begin position="260"/>
        <end position="267"/>
    </location>
</feature>
<feature type="strand" evidence="7">
    <location>
        <begin position="273"/>
        <end position="281"/>
    </location>
</feature>
<feature type="helix" evidence="7">
    <location>
        <begin position="288"/>
        <end position="296"/>
    </location>
</feature>
<feature type="strand" evidence="7">
    <location>
        <begin position="302"/>
        <end position="304"/>
    </location>
</feature>
<feature type="helix" evidence="7">
    <location>
        <begin position="307"/>
        <end position="311"/>
    </location>
</feature>
<feature type="strand" evidence="7">
    <location>
        <begin position="313"/>
        <end position="320"/>
    </location>
</feature>
<feature type="strand" evidence="7">
    <location>
        <begin position="326"/>
        <end position="328"/>
    </location>
</feature>
<feature type="turn" evidence="7">
    <location>
        <begin position="335"/>
        <end position="337"/>
    </location>
</feature>
<feature type="helix" evidence="7">
    <location>
        <begin position="341"/>
        <end position="357"/>
    </location>
</feature>
<feature type="strand" evidence="7">
    <location>
        <begin position="363"/>
        <end position="366"/>
    </location>
</feature>
<feature type="strand" evidence="7">
    <location>
        <begin position="379"/>
        <end position="386"/>
    </location>
</feature>
<sequence>MPNPEASLSPRSARYPKASMHVVPMLAPNDTAAFRALFASGAVDPASVVALIAKSEGSGLHNDHARVFADVSLRTALAEARGCPVEDLADSVTVAVSGGSPGVISPHVTVVTQEWVADLPAGLPGVGLVVGRGHTEPILPEDIGRTAQVDKVADAVAAAMLDAGVTDPDDVHLVMVKGPALSSRAVADALSRGKTVVTGDYGIGPMGSMCWSNDASALGVAVALGEVKRDLVADDRIRSDWDLFSAVAATSSGGEKRGGEVLLLANSAQSASELRIGHGITRDMADTEGIKTAIRTAGVDFDCCLSPAQQAQVVQVFGKFVLPGSDVLRGQHITALDDHEAHHVAKAVGGALVVSITGQPMSFISGGERNSHMGPPGGNPVAAVVRRLPA</sequence>
<accession>E3JD18</accession>
<organism>
    <name type="scientific">Pseudofrankia inefficax (strain DSM 45817 / CECT 9037 / DDB 130130 / EuI1c)</name>
    <name type="common">Frankia inefficax</name>
    <dbReference type="NCBI Taxonomy" id="298654"/>
    <lineage>
        <taxon>Bacteria</taxon>
        <taxon>Bacillati</taxon>
        <taxon>Actinomycetota</taxon>
        <taxon>Actinomycetes</taxon>
        <taxon>Frankiales</taxon>
        <taxon>Frankiaceae</taxon>
        <taxon>Pseudofrankia</taxon>
    </lineage>
</organism>
<evidence type="ECO:0000255" key="1">
    <source>
        <dbReference type="HAMAP-Rule" id="MF_01989"/>
    </source>
</evidence>
<evidence type="ECO:0000269" key="2">
    <source>
    </source>
</evidence>
<evidence type="ECO:0000305" key="3">
    <source>
    </source>
</evidence>
<evidence type="ECO:0007744" key="4">
    <source>
        <dbReference type="PDB" id="5HY0"/>
    </source>
</evidence>
<evidence type="ECO:0007744" key="5">
    <source>
        <dbReference type="PDB" id="5HY2"/>
    </source>
</evidence>
<evidence type="ECO:0007744" key="6">
    <source>
        <dbReference type="PDB" id="5HY4"/>
    </source>
</evidence>
<evidence type="ECO:0007829" key="7">
    <source>
        <dbReference type="PDB" id="5HY0"/>
    </source>
</evidence>
<evidence type="ECO:0007829" key="8">
    <source>
        <dbReference type="PDB" id="5HY4"/>
    </source>
</evidence>
<name>CYAH_PSEI1</name>
<proteinExistence type="evidence at protein level"/>
<dbReference type="EC" id="3.5.2.-" evidence="1"/>
<dbReference type="EMBL" id="CP002299">
    <property type="protein sequence ID" value="ADP81157.1"/>
    <property type="molecule type" value="Genomic_DNA"/>
</dbReference>
<dbReference type="RefSeq" id="WP_013424275.1">
    <property type="nucleotide sequence ID" value="NC_014666.1"/>
</dbReference>
<dbReference type="PDB" id="5HY0">
    <property type="method" value="X-ray"/>
    <property type="resolution" value="2.40 A"/>
    <property type="chains" value="A/B/C/D=1-390"/>
</dbReference>
<dbReference type="PDB" id="5HY2">
    <property type="method" value="X-ray"/>
    <property type="resolution" value="2.60 A"/>
    <property type="chains" value="A/B=1-390"/>
</dbReference>
<dbReference type="PDB" id="5HY4">
    <property type="method" value="X-ray"/>
    <property type="resolution" value="2.56 A"/>
    <property type="chains" value="A/B/C/D/E/F/G/H=1-390"/>
</dbReference>
<dbReference type="PDBsum" id="5HY0"/>
<dbReference type="PDBsum" id="5HY2"/>
<dbReference type="PDBsum" id="5HY4"/>
<dbReference type="SMR" id="E3JD18"/>
<dbReference type="STRING" id="298654.FraEuI1c_3137"/>
<dbReference type="KEGG" id="fri:FraEuI1c_3137"/>
<dbReference type="eggNOG" id="ENOG502Z8BS">
    <property type="taxonomic scope" value="Bacteria"/>
</dbReference>
<dbReference type="HOGENOM" id="CLU_808206_0_0_11"/>
<dbReference type="InParanoid" id="E3JD18"/>
<dbReference type="OrthoDB" id="569708at2"/>
<dbReference type="Proteomes" id="UP000002484">
    <property type="component" value="Chromosome"/>
</dbReference>
<dbReference type="GO" id="GO:0016812">
    <property type="term" value="F:hydrolase activity, acting on carbon-nitrogen (but not peptide) bonds, in cyclic amides"/>
    <property type="evidence" value="ECO:0007669"/>
    <property type="project" value="UniProtKB-UniRule"/>
</dbReference>
<dbReference type="Gene3D" id="3.30.1330.160">
    <property type="entry name" value="Cyanuric acid hydrolase/Barbituras, RU C"/>
    <property type="match status" value="1"/>
</dbReference>
<dbReference type="Gene3D" id="3.30.1330.170">
    <property type="entry name" value="Cyanuric acid hydrolase/Barbiturase, RU A"/>
    <property type="match status" value="1"/>
</dbReference>
<dbReference type="Gene3D" id="3.30.1330.180">
    <property type="entry name" value="Cyanuric acid hydrolase/Barbiturase, RU B"/>
    <property type="match status" value="1"/>
</dbReference>
<dbReference type="HAMAP" id="MF_01989">
    <property type="entry name" value="Cyc_amidohydrol"/>
    <property type="match status" value="1"/>
</dbReference>
<dbReference type="InterPro" id="IPR014086">
    <property type="entry name" value="AtzD/Barbiturase"/>
</dbReference>
<dbReference type="InterPro" id="IPR043008">
    <property type="entry name" value="AtzD/Barbiturase_RUA"/>
</dbReference>
<dbReference type="InterPro" id="IPR043006">
    <property type="entry name" value="AtzD/Barbiturase_RUB"/>
</dbReference>
<dbReference type="InterPro" id="IPR043007">
    <property type="entry name" value="AtzD/Barbiturase_RUC"/>
</dbReference>
<dbReference type="NCBIfam" id="TIGR02714">
    <property type="entry name" value="amido_AtzD_TrzD"/>
    <property type="match status" value="1"/>
</dbReference>
<dbReference type="Pfam" id="PF09663">
    <property type="entry name" value="Amido_AtzD_TrzD"/>
    <property type="match status" value="1"/>
</dbReference>
<gene>
    <name type="ordered locus">FraEuI1c_3137</name>
</gene>
<comment type="function">
    <text evidence="1 2">Cyclic amide hydrolase of unknown substrate specificity. Catalyzes the hydrolytic ring-opening of a cyclic amide. Does not act on cyanuric acid nor barbituric acid.</text>
</comment>
<comment type="subunit">
    <text evidence="1 2">Homotetramer; disulfide-linked. The disulfide forms between 2 monomers in the tetramer, such that each tetramer contains 2 sets of vicinal disulfides.</text>
</comment>
<comment type="domain">
    <text evidence="1 3">The monomer structure is formed from three repeating units (RUs) that share the same structure as one another. The monomer and the active site possess nearly threefold rotational symmetry, to the extent that the active site possesses three potential Ser-Lys catalytic dyads, but one of the 3 active site surfaces varies in composition suggesting it is involved in conferring substrate specificity.</text>
</comment>
<comment type="miscellaneous">
    <text evidence="3">The structural metal found in both cyanuric acid hydrolase and barbiturase is absent in the Frankia CyAH.</text>
</comment>
<comment type="similarity">
    <text evidence="1">Belongs to the cyclic amide hydrolase (CyAH) family.</text>
</comment>